<feature type="chain" id="PRO_1000214351" description="Small ribosomal subunit protein uS3">
    <location>
        <begin position="1"/>
        <end position="209"/>
    </location>
</feature>
<feature type="domain" description="KH type-2" evidence="1">
    <location>
        <begin position="17"/>
        <end position="86"/>
    </location>
</feature>
<name>RS3_THEGJ</name>
<gene>
    <name evidence="1" type="primary">rps3</name>
    <name type="ordered locus">TGAM_1997</name>
</gene>
<accession>C5A280</accession>
<keyword id="KW-1185">Reference proteome</keyword>
<keyword id="KW-0687">Ribonucleoprotein</keyword>
<keyword id="KW-0689">Ribosomal protein</keyword>
<keyword id="KW-0694">RNA-binding</keyword>
<keyword id="KW-0699">rRNA-binding</keyword>
<comment type="function">
    <text evidence="1">Binds the lower part of the 30S subunit head.</text>
</comment>
<comment type="subunit">
    <text evidence="1">Part of the 30S ribosomal subunit.</text>
</comment>
<comment type="similarity">
    <text evidence="1">Belongs to the universal ribosomal protein uS3 family.</text>
</comment>
<evidence type="ECO:0000255" key="1">
    <source>
        <dbReference type="HAMAP-Rule" id="MF_01309"/>
    </source>
</evidence>
<evidence type="ECO:0000305" key="2"/>
<reference key="1">
    <citation type="journal article" date="2007" name="Genome Biol.">
        <title>Genome analysis and genome-wide proteomics of Thermococcus gammatolerans, the most radioresistant organism known amongst the Archaea.</title>
        <authorList>
            <person name="Zivanovic Y."/>
            <person name="Armengaud J."/>
            <person name="Lagorce A."/>
            <person name="Leplat C."/>
            <person name="Guerin P."/>
            <person name="Dutertre M."/>
            <person name="Anthouard V."/>
            <person name="Forterre P."/>
            <person name="Wincker P."/>
            <person name="Confalonieri F."/>
        </authorList>
    </citation>
    <scope>NUCLEOTIDE SEQUENCE [LARGE SCALE GENOMIC DNA]</scope>
    <source>
        <strain>DSM 15229 / JCM 11827 / EJ3</strain>
    </source>
</reference>
<organism>
    <name type="scientific">Thermococcus gammatolerans (strain DSM 15229 / JCM 11827 / EJ3)</name>
    <dbReference type="NCBI Taxonomy" id="593117"/>
    <lineage>
        <taxon>Archaea</taxon>
        <taxon>Methanobacteriati</taxon>
        <taxon>Methanobacteriota</taxon>
        <taxon>Thermococci</taxon>
        <taxon>Thermococcales</taxon>
        <taxon>Thermococcaceae</taxon>
        <taxon>Thermococcus</taxon>
    </lineage>
</organism>
<protein>
    <recommendedName>
        <fullName evidence="1">Small ribosomal subunit protein uS3</fullName>
    </recommendedName>
    <alternativeName>
        <fullName evidence="2">30S ribosomal protein S3</fullName>
    </alternativeName>
</protein>
<sequence length="209" mass="23324">MAIERYFIKEGVKEMLIDEYLEKELRRAGYGGIDIKKTPLGTKVIIFAASPGYVIGRGGRRIRELTRILERQFGLENPQIEVEEIKNPYLNAKVQAVRLAQALERGIHFRRAAYSAIRAIMRNGARGVEIRLSGKLTGERAKSVRFYQGYLAKVGNPAETLVSKGYAQALLKLGVIGVKVAIMPPDARLPDEIEVKEIVEEEVSGNEAQ</sequence>
<proteinExistence type="inferred from homology"/>
<dbReference type="EMBL" id="CP001398">
    <property type="protein sequence ID" value="ACS34499.1"/>
    <property type="molecule type" value="Genomic_DNA"/>
</dbReference>
<dbReference type="RefSeq" id="WP_015859602.1">
    <property type="nucleotide sequence ID" value="NC_012804.1"/>
</dbReference>
<dbReference type="SMR" id="C5A280"/>
<dbReference type="STRING" id="593117.TGAM_1997"/>
<dbReference type="PaxDb" id="593117-TGAM_1997"/>
<dbReference type="GeneID" id="7987054"/>
<dbReference type="KEGG" id="tga:TGAM_1997"/>
<dbReference type="PATRIC" id="fig|593117.10.peg.2007"/>
<dbReference type="eggNOG" id="arCOG04097">
    <property type="taxonomic scope" value="Archaea"/>
</dbReference>
<dbReference type="HOGENOM" id="CLU_058591_1_1_2"/>
<dbReference type="OrthoDB" id="9126at2157"/>
<dbReference type="Proteomes" id="UP000001488">
    <property type="component" value="Chromosome"/>
</dbReference>
<dbReference type="GO" id="GO:0022627">
    <property type="term" value="C:cytosolic small ribosomal subunit"/>
    <property type="evidence" value="ECO:0007669"/>
    <property type="project" value="TreeGrafter"/>
</dbReference>
<dbReference type="GO" id="GO:0019843">
    <property type="term" value="F:rRNA binding"/>
    <property type="evidence" value="ECO:0007669"/>
    <property type="project" value="UniProtKB-UniRule"/>
</dbReference>
<dbReference type="GO" id="GO:0003735">
    <property type="term" value="F:structural constituent of ribosome"/>
    <property type="evidence" value="ECO:0007669"/>
    <property type="project" value="InterPro"/>
</dbReference>
<dbReference type="GO" id="GO:0006412">
    <property type="term" value="P:translation"/>
    <property type="evidence" value="ECO:0007669"/>
    <property type="project" value="UniProtKB-UniRule"/>
</dbReference>
<dbReference type="CDD" id="cd02411">
    <property type="entry name" value="KH-II_30S_S3_arch"/>
    <property type="match status" value="1"/>
</dbReference>
<dbReference type="FunFam" id="3.30.1140.32:FF:000012">
    <property type="entry name" value="30S ribosomal protein S3"/>
    <property type="match status" value="1"/>
</dbReference>
<dbReference type="FunFam" id="3.30.300.20:FF:000001">
    <property type="entry name" value="30S ribosomal protein S3"/>
    <property type="match status" value="1"/>
</dbReference>
<dbReference type="Gene3D" id="3.30.300.20">
    <property type="match status" value="1"/>
</dbReference>
<dbReference type="Gene3D" id="3.30.1140.32">
    <property type="entry name" value="Ribosomal protein S3, C-terminal domain"/>
    <property type="match status" value="1"/>
</dbReference>
<dbReference type="HAMAP" id="MF_01309_A">
    <property type="entry name" value="Ribosomal_uS3_A"/>
    <property type="match status" value="1"/>
</dbReference>
<dbReference type="InterPro" id="IPR004087">
    <property type="entry name" value="KH_dom"/>
</dbReference>
<dbReference type="InterPro" id="IPR015946">
    <property type="entry name" value="KH_dom-like_a/b"/>
</dbReference>
<dbReference type="InterPro" id="IPR004044">
    <property type="entry name" value="KH_dom_type_2"/>
</dbReference>
<dbReference type="InterPro" id="IPR009019">
    <property type="entry name" value="KH_sf_prok-type"/>
</dbReference>
<dbReference type="InterPro" id="IPR036419">
    <property type="entry name" value="Ribosomal_S3_C_sf"/>
</dbReference>
<dbReference type="InterPro" id="IPR027488">
    <property type="entry name" value="Ribosomal_uS3_arc"/>
</dbReference>
<dbReference type="InterPro" id="IPR001351">
    <property type="entry name" value="Ribosomal_uS3_C"/>
</dbReference>
<dbReference type="InterPro" id="IPR005703">
    <property type="entry name" value="Ribosomal_uS3_euk/arc"/>
</dbReference>
<dbReference type="NCBIfam" id="NF003219">
    <property type="entry name" value="PRK04191.1"/>
    <property type="match status" value="1"/>
</dbReference>
<dbReference type="NCBIfam" id="TIGR01008">
    <property type="entry name" value="uS3_euk_arch"/>
    <property type="match status" value="1"/>
</dbReference>
<dbReference type="PANTHER" id="PTHR11760">
    <property type="entry name" value="30S/40S RIBOSOMAL PROTEIN S3"/>
    <property type="match status" value="1"/>
</dbReference>
<dbReference type="PANTHER" id="PTHR11760:SF32">
    <property type="entry name" value="SMALL RIBOSOMAL SUBUNIT PROTEIN US3"/>
    <property type="match status" value="1"/>
</dbReference>
<dbReference type="Pfam" id="PF07650">
    <property type="entry name" value="KH_2"/>
    <property type="match status" value="1"/>
</dbReference>
<dbReference type="Pfam" id="PF00189">
    <property type="entry name" value="Ribosomal_S3_C"/>
    <property type="match status" value="1"/>
</dbReference>
<dbReference type="SMART" id="SM00322">
    <property type="entry name" value="KH"/>
    <property type="match status" value="1"/>
</dbReference>
<dbReference type="SUPFAM" id="SSF54814">
    <property type="entry name" value="Prokaryotic type KH domain (KH-domain type II)"/>
    <property type="match status" value="1"/>
</dbReference>
<dbReference type="SUPFAM" id="SSF54821">
    <property type="entry name" value="Ribosomal protein S3 C-terminal domain"/>
    <property type="match status" value="1"/>
</dbReference>
<dbReference type="PROSITE" id="PS50823">
    <property type="entry name" value="KH_TYPE_2"/>
    <property type="match status" value="1"/>
</dbReference>